<feature type="chain" id="PRO_1000147831" description="Uncharacterized Nudix hydrolase NudL">
    <location>
        <begin position="1"/>
        <end position="199"/>
    </location>
</feature>
<feature type="domain" description="Nudix hydrolase" evidence="1">
    <location>
        <begin position="38"/>
        <end position="169"/>
    </location>
</feature>
<feature type="short sequence motif" description="Nudix box">
    <location>
        <begin position="76"/>
        <end position="98"/>
    </location>
</feature>
<feature type="binding site" evidence="1">
    <location>
        <position position="92"/>
    </location>
    <ligand>
        <name>Mg(2+)</name>
        <dbReference type="ChEBI" id="CHEBI:18420"/>
    </ligand>
</feature>
<feature type="binding site" evidence="1">
    <location>
        <position position="96"/>
    </location>
    <ligand>
        <name>Mg(2+)</name>
        <dbReference type="ChEBI" id="CHEBI:18420"/>
    </ligand>
</feature>
<accession>B1JP41</accession>
<evidence type="ECO:0000255" key="1">
    <source>
        <dbReference type="HAMAP-Rule" id="MF_01592"/>
    </source>
</evidence>
<protein>
    <recommendedName>
        <fullName evidence="1">Uncharacterized Nudix hydrolase NudL</fullName>
        <ecNumber evidence="1">3.6.1.-</ecNumber>
    </recommendedName>
</protein>
<reference key="1">
    <citation type="submission" date="2008-02" db="EMBL/GenBank/DDBJ databases">
        <title>Complete sequence of Yersinia pseudotuberculosis YPIII.</title>
        <authorList>
            <consortium name="US DOE Joint Genome Institute"/>
            <person name="Copeland A."/>
            <person name="Lucas S."/>
            <person name="Lapidus A."/>
            <person name="Glavina del Rio T."/>
            <person name="Dalin E."/>
            <person name="Tice H."/>
            <person name="Bruce D."/>
            <person name="Goodwin L."/>
            <person name="Pitluck S."/>
            <person name="Munk A.C."/>
            <person name="Brettin T."/>
            <person name="Detter J.C."/>
            <person name="Han C."/>
            <person name="Tapia R."/>
            <person name="Schmutz J."/>
            <person name="Larimer F."/>
            <person name="Land M."/>
            <person name="Hauser L."/>
            <person name="Challacombe J.F."/>
            <person name="Green L."/>
            <person name="Lindler L.E."/>
            <person name="Nikolich M.P."/>
            <person name="Richardson P."/>
        </authorList>
    </citation>
    <scope>NUCLEOTIDE SEQUENCE [LARGE SCALE GENOMIC DNA]</scope>
    <source>
        <strain>YPIII</strain>
    </source>
</reference>
<name>NUDL_YERPY</name>
<comment type="function">
    <text evidence="1">Probably mediates the hydrolysis of some nucleoside diphosphate derivatives.</text>
</comment>
<comment type="cofactor">
    <cofactor evidence="1">
        <name>Mn(2+)</name>
        <dbReference type="ChEBI" id="CHEBI:29035"/>
    </cofactor>
    <cofactor evidence="1">
        <name>Mg(2+)</name>
        <dbReference type="ChEBI" id="CHEBI:18420"/>
    </cofactor>
</comment>
<comment type="similarity">
    <text evidence="1">Belongs to the Nudix hydrolase family. PCD1 subfamily.</text>
</comment>
<proteinExistence type="inferred from homology"/>
<keyword id="KW-0378">Hydrolase</keyword>
<keyword id="KW-0460">Magnesium</keyword>
<keyword id="KW-0464">Manganese</keyword>
<keyword id="KW-0479">Metal-binding</keyword>
<organism>
    <name type="scientific">Yersinia pseudotuberculosis serotype O:3 (strain YPIII)</name>
    <dbReference type="NCBI Taxonomy" id="502800"/>
    <lineage>
        <taxon>Bacteria</taxon>
        <taxon>Pseudomonadati</taxon>
        <taxon>Pseudomonadota</taxon>
        <taxon>Gammaproteobacteria</taxon>
        <taxon>Enterobacterales</taxon>
        <taxon>Yersiniaceae</taxon>
        <taxon>Yersinia</taxon>
    </lineage>
</organism>
<sequence>MSELITGQYLSEFINRFQLQLPQPDNVLTHSHYFSATNRRAAVLIPIICRPEPTLLLTRRADHLRKHAGQVAFPGGKADPDDQSLISTALREAEEEVAIPASVVHVLGKLAPLNSSSGYHVTPIVGLVPANIPFYGNDEEVAGLFEIPLHEALSLSRYHSLDIHREGINHRVYLSWYENQFIWGLTATIIRHLAQQVSI</sequence>
<dbReference type="EC" id="3.6.1.-" evidence="1"/>
<dbReference type="EMBL" id="CP000950">
    <property type="protein sequence ID" value="ACA68727.1"/>
    <property type="molecule type" value="Genomic_DNA"/>
</dbReference>
<dbReference type="RefSeq" id="WP_002211080.1">
    <property type="nucleotide sequence ID" value="NZ_CP009792.1"/>
</dbReference>
<dbReference type="SMR" id="B1JP41"/>
<dbReference type="KEGG" id="ypy:YPK_2450"/>
<dbReference type="GO" id="GO:0010945">
    <property type="term" value="F:coenzyme A diphosphatase activity"/>
    <property type="evidence" value="ECO:0007669"/>
    <property type="project" value="InterPro"/>
</dbReference>
<dbReference type="GO" id="GO:0000287">
    <property type="term" value="F:magnesium ion binding"/>
    <property type="evidence" value="ECO:0007669"/>
    <property type="project" value="UniProtKB-UniRule"/>
</dbReference>
<dbReference type="GO" id="GO:0030145">
    <property type="term" value="F:manganese ion binding"/>
    <property type="evidence" value="ECO:0007669"/>
    <property type="project" value="UniProtKB-UniRule"/>
</dbReference>
<dbReference type="GO" id="GO:0009132">
    <property type="term" value="P:nucleoside diphosphate metabolic process"/>
    <property type="evidence" value="ECO:0007669"/>
    <property type="project" value="InterPro"/>
</dbReference>
<dbReference type="CDD" id="cd03426">
    <property type="entry name" value="NUDIX_CoAse_Nudt7"/>
    <property type="match status" value="1"/>
</dbReference>
<dbReference type="Gene3D" id="3.90.79.10">
    <property type="entry name" value="Nucleoside Triphosphate Pyrophosphohydrolase"/>
    <property type="match status" value="1"/>
</dbReference>
<dbReference type="HAMAP" id="MF_01592">
    <property type="entry name" value="Nudix_NudL"/>
    <property type="match status" value="1"/>
</dbReference>
<dbReference type="InterPro" id="IPR045121">
    <property type="entry name" value="CoAse"/>
</dbReference>
<dbReference type="InterPro" id="IPR015797">
    <property type="entry name" value="NUDIX_hydrolase-like_dom_sf"/>
</dbReference>
<dbReference type="InterPro" id="IPR000086">
    <property type="entry name" value="NUDIX_hydrolase_dom"/>
</dbReference>
<dbReference type="InterPro" id="IPR000059">
    <property type="entry name" value="NUDIX_hydrolase_NudL_CS"/>
</dbReference>
<dbReference type="InterPro" id="IPR023735">
    <property type="entry name" value="Nudix_NudL"/>
</dbReference>
<dbReference type="NCBIfam" id="NF007980">
    <property type="entry name" value="PRK10707.1"/>
    <property type="match status" value="1"/>
</dbReference>
<dbReference type="PANTHER" id="PTHR12992:SF11">
    <property type="entry name" value="MITOCHONDRIAL COENZYME A DIPHOSPHATASE NUDT8"/>
    <property type="match status" value="1"/>
</dbReference>
<dbReference type="PANTHER" id="PTHR12992">
    <property type="entry name" value="NUDIX HYDROLASE"/>
    <property type="match status" value="1"/>
</dbReference>
<dbReference type="Pfam" id="PF00293">
    <property type="entry name" value="NUDIX"/>
    <property type="match status" value="1"/>
</dbReference>
<dbReference type="SUPFAM" id="SSF55811">
    <property type="entry name" value="Nudix"/>
    <property type="match status" value="1"/>
</dbReference>
<dbReference type="PROSITE" id="PS51462">
    <property type="entry name" value="NUDIX"/>
    <property type="match status" value="1"/>
</dbReference>
<dbReference type="PROSITE" id="PS01293">
    <property type="entry name" value="NUDIX_COA"/>
    <property type="match status" value="1"/>
</dbReference>
<gene>
    <name evidence="1" type="primary">nudL</name>
    <name type="ordered locus">YPK_2450</name>
</gene>